<sequence>MGCLLILLLTLICFSLRLCLATDVITFSSEFRDSETVVSNHSTFRFGFFSPVNSTGRYAGIWFNNIPVQTVVWVANSNSPINDSSGMVSISKEGNLVVMDGRGQVHWSTNVLVPVAANTFYARLLNTGNLVLLGTTNTGDEILWESFEHPQNIYLPTMSLATDTKTGRSLKLRSWKSPFDPSPGRYSAGLIPLPFPELVVWKDDLLMWRSGPWNGQYFIGLPNMDYRINLFELTLSSDNRGSVSMSYAGNTLLYHFLLDSEGSVFQRDWNVAIQEWKTWLKVPSTKCDTYATCGQFASCRFNPGSTPPCMCIRGFKPQSYAEWNNGNWTQGCVRKAPLQCESRDNNDGSRKSDGFVRVQKMKVPHNPQRSGANEQDCPESCLKNCSCTAYSFDRGIGCLLWSGNLMDMQEFSGTGVVFYIRLADSEFKKRTNRSIVITVTLLVGAFLFAGTVVLALWKIAKHREKNRNTRLLNERMEALSSNDVGAILVNQYKLKELPLFEFQVLAVATNNFSITNKLGQGGFGAVYKGRLQEGLDIAVKRLSRTSGQGVEEFVNEVVVISKLQHRNLVRLLGFCIEGEERMLVYEFMPENCLDAYLFDPVKQRLLDWKTRFNIIDGICRGLMYLHRDSRLKIIHRDLKASNILLDENLNPKISDFGLARIFQGNEDEVSTVRVVGTYGYMAPEYAMGGLFSEKSDVFSLGVILLEIVSGRRNSSFYNDGQNPNLSAYAWKLWNTGEDIALVDPVIFEECFENEIRRCVHVGLLCVQDHANDRPSVATVIWMLSSENSNLPEPKQPAFIPRRGTSEVESSGQSDPRASINNVSLTKITGR</sequence>
<organism>
    <name type="scientific">Arabidopsis thaliana</name>
    <name type="common">Mouse-ear cress</name>
    <dbReference type="NCBI Taxonomy" id="3702"/>
    <lineage>
        <taxon>Eukaryota</taxon>
        <taxon>Viridiplantae</taxon>
        <taxon>Streptophyta</taxon>
        <taxon>Embryophyta</taxon>
        <taxon>Tracheophyta</taxon>
        <taxon>Spermatophyta</taxon>
        <taxon>Magnoliopsida</taxon>
        <taxon>eudicotyledons</taxon>
        <taxon>Gunneridae</taxon>
        <taxon>Pentapetalae</taxon>
        <taxon>rosids</taxon>
        <taxon>malvids</taxon>
        <taxon>Brassicales</taxon>
        <taxon>Brassicaceae</taxon>
        <taxon>Camelineae</taxon>
        <taxon>Arabidopsis</taxon>
    </lineage>
</organism>
<gene>
    <name type="primary">SD113</name>
    <name type="synonym">CBRLK1</name>
    <name type="synonym">RKS2</name>
    <name type="ordered locus">At1g11350</name>
    <name type="ORF">T23J18.2</name>
</gene>
<accession>Q9LPZ9</accession>
<accession>Q9ZT06</accession>
<reference key="1">
    <citation type="submission" date="1998-08" db="EMBL/GenBank/DDBJ databases">
        <title>Expression analysis of Arabidopsis thaliana genes encoding receptor-like protein kinases.</title>
        <authorList>
            <person name="Ohtake Y."/>
            <person name="Takahashi T."/>
            <person name="Komeda Y."/>
        </authorList>
    </citation>
    <scope>NUCLEOTIDE SEQUENCE [GENOMIC DNA]</scope>
    <source>
        <strain>cv. Columbia</strain>
    </source>
</reference>
<reference key="2">
    <citation type="journal article" date="2000" name="Nature">
        <title>Sequence and analysis of chromosome 1 of the plant Arabidopsis thaliana.</title>
        <authorList>
            <person name="Theologis A."/>
            <person name="Ecker J.R."/>
            <person name="Palm C.J."/>
            <person name="Federspiel N.A."/>
            <person name="Kaul S."/>
            <person name="White O."/>
            <person name="Alonso J."/>
            <person name="Altafi H."/>
            <person name="Araujo R."/>
            <person name="Bowman C.L."/>
            <person name="Brooks S.Y."/>
            <person name="Buehler E."/>
            <person name="Chan A."/>
            <person name="Chao Q."/>
            <person name="Chen H."/>
            <person name="Cheuk R.F."/>
            <person name="Chin C.W."/>
            <person name="Chung M.K."/>
            <person name="Conn L."/>
            <person name="Conway A.B."/>
            <person name="Conway A.R."/>
            <person name="Creasy T.H."/>
            <person name="Dewar K."/>
            <person name="Dunn P."/>
            <person name="Etgu P."/>
            <person name="Feldblyum T.V."/>
            <person name="Feng J.-D."/>
            <person name="Fong B."/>
            <person name="Fujii C.Y."/>
            <person name="Gill J.E."/>
            <person name="Goldsmith A.D."/>
            <person name="Haas B."/>
            <person name="Hansen N.F."/>
            <person name="Hughes B."/>
            <person name="Huizar L."/>
            <person name="Hunter J.L."/>
            <person name="Jenkins J."/>
            <person name="Johnson-Hopson C."/>
            <person name="Khan S."/>
            <person name="Khaykin E."/>
            <person name="Kim C.J."/>
            <person name="Koo H.L."/>
            <person name="Kremenetskaia I."/>
            <person name="Kurtz D.B."/>
            <person name="Kwan A."/>
            <person name="Lam B."/>
            <person name="Langin-Hooper S."/>
            <person name="Lee A."/>
            <person name="Lee J.M."/>
            <person name="Lenz C.A."/>
            <person name="Li J.H."/>
            <person name="Li Y.-P."/>
            <person name="Lin X."/>
            <person name="Liu S.X."/>
            <person name="Liu Z.A."/>
            <person name="Luros J.S."/>
            <person name="Maiti R."/>
            <person name="Marziali A."/>
            <person name="Militscher J."/>
            <person name="Miranda M."/>
            <person name="Nguyen M."/>
            <person name="Nierman W.C."/>
            <person name="Osborne B.I."/>
            <person name="Pai G."/>
            <person name="Peterson J."/>
            <person name="Pham P.K."/>
            <person name="Rizzo M."/>
            <person name="Rooney T."/>
            <person name="Rowley D."/>
            <person name="Sakano H."/>
            <person name="Salzberg S.L."/>
            <person name="Schwartz J.R."/>
            <person name="Shinn P."/>
            <person name="Southwick A.M."/>
            <person name="Sun H."/>
            <person name="Tallon L.J."/>
            <person name="Tambunga G."/>
            <person name="Toriumi M.J."/>
            <person name="Town C.D."/>
            <person name="Utterback T."/>
            <person name="Van Aken S."/>
            <person name="Vaysberg M."/>
            <person name="Vysotskaia V.S."/>
            <person name="Walker M."/>
            <person name="Wu D."/>
            <person name="Yu G."/>
            <person name="Fraser C.M."/>
            <person name="Venter J.C."/>
            <person name="Davis R.W."/>
        </authorList>
    </citation>
    <scope>NUCLEOTIDE SEQUENCE [LARGE SCALE GENOMIC DNA]</scope>
    <source>
        <strain>cv. Columbia</strain>
    </source>
</reference>
<reference key="3">
    <citation type="journal article" date="2017" name="Plant J.">
        <title>Araport11: a complete reannotation of the Arabidopsis thaliana reference genome.</title>
        <authorList>
            <person name="Cheng C.Y."/>
            <person name="Krishnakumar V."/>
            <person name="Chan A.P."/>
            <person name="Thibaud-Nissen F."/>
            <person name="Schobel S."/>
            <person name="Town C.D."/>
        </authorList>
    </citation>
    <scope>GENOME REANNOTATION</scope>
    <source>
        <strain>cv. Columbia</strain>
    </source>
</reference>
<reference key="4">
    <citation type="journal article" date="2004" name="Genome Res.">
        <title>Whole genome sequence comparisons and 'full-length' cDNA sequences: a combined approach to evaluate and improve Arabidopsis genome annotation.</title>
        <authorList>
            <person name="Castelli V."/>
            <person name="Aury J.-M."/>
            <person name="Jaillon O."/>
            <person name="Wincker P."/>
            <person name="Clepet C."/>
            <person name="Menard M."/>
            <person name="Cruaud C."/>
            <person name="Quetier F."/>
            <person name="Scarpelli C."/>
            <person name="Schaechter V."/>
            <person name="Temple G."/>
            <person name="Caboche M."/>
            <person name="Weissenbach J."/>
            <person name="Salanoubat M."/>
        </authorList>
    </citation>
    <scope>NUCLEOTIDE SEQUENCE [LARGE SCALE MRNA]</scope>
    <source>
        <strain>cv. Columbia</strain>
    </source>
</reference>
<reference key="5">
    <citation type="journal article" date="2008" name="Plant Physiol.">
        <title>Interactions between the S-domain receptor kinases and AtPUB-ARM E3 ubiquitin ligases suggest a conserved signaling pathway in Arabidopsis.</title>
        <authorList>
            <person name="Samuel M.A."/>
            <person name="Mudgil Y."/>
            <person name="Salt J.N."/>
            <person name="Delmas F."/>
            <person name="Ramachandran S."/>
            <person name="Chilelli A."/>
            <person name="Goring D.R."/>
        </authorList>
    </citation>
    <scope>GENE FAMILY</scope>
    <scope>NOMENCLATURE</scope>
    <scope>INTERACTION WITH PUB9; PUB13 AND PUB14</scope>
</reference>
<reference key="6">
    <citation type="journal article" date="2009" name="Biochem. Biophys. Res. Commun.">
        <title>An S-locus receptor-like kinase plays a role as a negative regulator in plant defense responses.</title>
        <authorList>
            <person name="Kim H.S."/>
            <person name="Jung M.S."/>
            <person name="Lee S.M."/>
            <person name="Kim K.E."/>
            <person name="Byun H."/>
            <person name="Choi M.S."/>
            <person name="Park H.C."/>
            <person name="Cho M.J."/>
            <person name="Chung W.S."/>
        </authorList>
    </citation>
    <scope>FUNCTION</scope>
    <scope>DISRUPTION PHENOTYPE</scope>
    <scope>TISSUE SPECIFICITY</scope>
    <scope>INDUCTION BY BIOTIC AND ABIOTIC STRESSES</scope>
</reference>
<reference key="7">
    <citation type="journal article" date="2009" name="FEBS Lett.">
        <title>An S-locus receptor-like kinase in plasma membrane interacts with calmodulin in Arabidopsis.</title>
        <authorList>
            <person name="Kim H.S."/>
            <person name="Jung M.S."/>
            <person name="Lee K."/>
            <person name="Kim K.E."/>
            <person name="Yoo J.H."/>
            <person name="Kim M.C."/>
            <person name="Kim D.H."/>
            <person name="Cho M.J."/>
            <person name="Chung W.S."/>
        </authorList>
    </citation>
    <scope>SUBCELLULAR LOCATION</scope>
    <scope>AUTOPHOSPHORYLATION</scope>
    <scope>CATALYTIC ACTIVITY</scope>
    <scope>INTERACTION WITH CALMODULIN</scope>
    <scope>IDENTIFICATION BY MASS SPECTROMETRY</scope>
    <scope>PHOSPHORYLATION AT THR-545; SER-546; SER-561; SER-641; SER-654; SER-670; THR-671; SER-714; SER-715; SER-726; SER-805; SER-809; SER-810; SER-813; SER-818; SER-823; THR-825 AND THR-828</scope>
</reference>
<feature type="signal peptide" evidence="2">
    <location>
        <begin position="1"/>
        <end position="21"/>
    </location>
</feature>
<feature type="chain" id="PRO_0000401301" description="G-type lectin S-receptor-like serine/threonine-protein kinase SD1-13">
    <location>
        <begin position="22"/>
        <end position="830"/>
    </location>
</feature>
<feature type="topological domain" description="Extracellular" evidence="2">
    <location>
        <begin position="22"/>
        <end position="434"/>
    </location>
</feature>
<feature type="transmembrane region" description="Helical" evidence="2">
    <location>
        <begin position="435"/>
        <end position="455"/>
    </location>
</feature>
<feature type="topological domain" description="Cytoplasmic" evidence="2">
    <location>
        <begin position="456"/>
        <end position="830"/>
    </location>
</feature>
<feature type="domain" description="Bulb-type lectin" evidence="3">
    <location>
        <begin position="22"/>
        <end position="145"/>
    </location>
</feature>
<feature type="domain" description="EGF-like; atypical">
    <location>
        <begin position="283"/>
        <end position="321"/>
    </location>
</feature>
<feature type="domain" description="PAN" evidence="5">
    <location>
        <begin position="340"/>
        <end position="423"/>
    </location>
</feature>
<feature type="domain" description="Protein kinase" evidence="4">
    <location>
        <begin position="512"/>
        <end position="798"/>
    </location>
</feature>
<feature type="region of interest" description="CaM-binding">
    <location>
        <begin position="601"/>
        <end position="618"/>
    </location>
</feature>
<feature type="region of interest" description="Disordered" evidence="7">
    <location>
        <begin position="789"/>
        <end position="830"/>
    </location>
</feature>
<feature type="compositionally biased region" description="Polar residues" evidence="7">
    <location>
        <begin position="806"/>
        <end position="830"/>
    </location>
</feature>
<feature type="active site" description="Proton acceptor" evidence="4 6">
    <location>
        <position position="637"/>
    </location>
</feature>
<feature type="binding site" evidence="4">
    <location>
        <begin position="518"/>
        <end position="526"/>
    </location>
    <ligand>
        <name>ATP</name>
        <dbReference type="ChEBI" id="CHEBI:30616"/>
    </ligand>
</feature>
<feature type="binding site" evidence="4">
    <location>
        <position position="540"/>
    </location>
    <ligand>
        <name>ATP</name>
        <dbReference type="ChEBI" id="CHEBI:30616"/>
    </ligand>
</feature>
<feature type="modified residue" description="Phosphothreonine" evidence="12">
    <location>
        <position position="545"/>
    </location>
</feature>
<feature type="modified residue" description="Phosphoserine" evidence="12">
    <location>
        <position position="546"/>
    </location>
</feature>
<feature type="modified residue" description="Phosphoserine" evidence="12">
    <location>
        <position position="561"/>
    </location>
</feature>
<feature type="modified residue" description="Phosphoserine" evidence="9">
    <location>
        <position position="641"/>
    </location>
</feature>
<feature type="modified residue" description="Phosphoserine" evidence="9">
    <location>
        <position position="654"/>
    </location>
</feature>
<feature type="modified residue" description="Phosphoserine" evidence="9">
    <location>
        <position position="670"/>
    </location>
</feature>
<feature type="modified residue" description="Phosphothreonine" evidence="9">
    <location>
        <position position="671"/>
    </location>
</feature>
<feature type="modified residue" description="Phosphoserine" evidence="12">
    <location>
        <position position="714"/>
    </location>
</feature>
<feature type="modified residue" description="Phosphoserine" evidence="12">
    <location>
        <position position="715"/>
    </location>
</feature>
<feature type="modified residue" description="Phosphoserine" evidence="12">
    <location>
        <position position="726"/>
    </location>
</feature>
<feature type="modified residue" description="Phosphoserine" evidence="12">
    <location>
        <position position="805"/>
    </location>
</feature>
<feature type="modified residue" description="Phosphoserine" evidence="12">
    <location>
        <position position="809"/>
    </location>
</feature>
<feature type="modified residue" description="Phosphoserine" evidence="12">
    <location>
        <position position="810"/>
    </location>
</feature>
<feature type="modified residue" description="Phosphoserine" evidence="12">
    <location>
        <position position="813"/>
    </location>
</feature>
<feature type="modified residue" description="Phosphoserine" evidence="12">
    <location>
        <position position="818"/>
    </location>
</feature>
<feature type="modified residue" description="Phosphoserine" evidence="12">
    <location>
        <position position="823"/>
    </location>
</feature>
<feature type="modified residue" description="Phosphothreonine" evidence="12">
    <location>
        <position position="825"/>
    </location>
</feature>
<feature type="modified residue" description="Phosphothreonine" evidence="12">
    <location>
        <position position="828"/>
    </location>
</feature>
<feature type="glycosylation site" description="N-linked (GlcNAc...) asparagine" evidence="2">
    <location>
        <position position="40"/>
    </location>
</feature>
<feature type="glycosylation site" description="N-linked (GlcNAc...) asparagine" evidence="2">
    <location>
        <position position="53"/>
    </location>
</feature>
<feature type="glycosylation site" description="N-linked (GlcNAc...) asparagine" evidence="2">
    <location>
        <position position="82"/>
    </location>
</feature>
<feature type="glycosylation site" description="N-linked (GlcNAc...) asparagine" evidence="2">
    <location>
        <position position="327"/>
    </location>
</feature>
<feature type="glycosylation site" description="N-linked (GlcNAc...) asparagine" evidence="2">
    <location>
        <position position="384"/>
    </location>
</feature>
<feature type="glycosylation site" description="N-linked (GlcNAc...) asparagine" evidence="2">
    <location>
        <position position="432"/>
    </location>
</feature>
<feature type="disulfide bond" evidence="1">
    <location>
        <begin position="287"/>
        <end position="299"/>
    </location>
</feature>
<feature type="disulfide bond" evidence="1">
    <location>
        <begin position="293"/>
        <end position="309"/>
    </location>
</feature>
<feature type="disulfide bond" evidence="1">
    <location>
        <begin position="377"/>
        <end position="398"/>
    </location>
</feature>
<feature type="disulfide bond" evidence="1">
    <location>
        <begin position="381"/>
        <end position="387"/>
    </location>
</feature>
<feature type="sequence conflict" description="In Ref. 1; AAC95353." evidence="11" ref="1">
    <original>RG</original>
    <variation>KR</variation>
    <location>
        <begin position="313"/>
        <end position="314"/>
    </location>
</feature>
<feature type="sequence conflict" description="In Ref. 1; AAC95353." evidence="11" ref="1">
    <original>Y</original>
    <variation>N</variation>
    <location>
        <position position="390"/>
    </location>
</feature>
<feature type="sequence conflict" description="In Ref. 1; AAC95353." evidence="11" ref="1">
    <original>V</original>
    <variation>F</variation>
    <location>
        <position position="558"/>
    </location>
</feature>
<evidence type="ECO:0000250" key="1"/>
<evidence type="ECO:0000255" key="2"/>
<evidence type="ECO:0000255" key="3">
    <source>
        <dbReference type="PROSITE-ProRule" id="PRU00038"/>
    </source>
</evidence>
<evidence type="ECO:0000255" key="4">
    <source>
        <dbReference type="PROSITE-ProRule" id="PRU00159"/>
    </source>
</evidence>
<evidence type="ECO:0000255" key="5">
    <source>
        <dbReference type="PROSITE-ProRule" id="PRU00315"/>
    </source>
</evidence>
<evidence type="ECO:0000255" key="6">
    <source>
        <dbReference type="PROSITE-ProRule" id="PRU10027"/>
    </source>
</evidence>
<evidence type="ECO:0000256" key="7">
    <source>
        <dbReference type="SAM" id="MobiDB-lite"/>
    </source>
</evidence>
<evidence type="ECO:0000269" key="8">
    <source>
    </source>
</evidence>
<evidence type="ECO:0000269" key="9">
    <source>
    </source>
</evidence>
<evidence type="ECO:0000269" key="10">
    <source>
    </source>
</evidence>
<evidence type="ECO:0000305" key="11"/>
<evidence type="ECO:0000305" key="12">
    <source>
    </source>
</evidence>
<comment type="function">
    <text evidence="10">Receptor-like serine/threonine-protein kinase that represses the disease resistance signaling pathway triggered in response to bacterial pathogen such as Pseudomonas syringae pv. tomato.</text>
</comment>
<comment type="catalytic activity">
    <reaction evidence="9">
        <text>L-seryl-[protein] + ATP = O-phospho-L-seryl-[protein] + ADP + H(+)</text>
        <dbReference type="Rhea" id="RHEA:17989"/>
        <dbReference type="Rhea" id="RHEA-COMP:9863"/>
        <dbReference type="Rhea" id="RHEA-COMP:11604"/>
        <dbReference type="ChEBI" id="CHEBI:15378"/>
        <dbReference type="ChEBI" id="CHEBI:29999"/>
        <dbReference type="ChEBI" id="CHEBI:30616"/>
        <dbReference type="ChEBI" id="CHEBI:83421"/>
        <dbReference type="ChEBI" id="CHEBI:456216"/>
        <dbReference type="EC" id="2.7.11.1"/>
    </reaction>
</comment>
<comment type="catalytic activity">
    <reaction evidence="9">
        <text>L-threonyl-[protein] + ATP = O-phospho-L-threonyl-[protein] + ADP + H(+)</text>
        <dbReference type="Rhea" id="RHEA:46608"/>
        <dbReference type="Rhea" id="RHEA-COMP:11060"/>
        <dbReference type="Rhea" id="RHEA-COMP:11605"/>
        <dbReference type="ChEBI" id="CHEBI:15378"/>
        <dbReference type="ChEBI" id="CHEBI:30013"/>
        <dbReference type="ChEBI" id="CHEBI:30616"/>
        <dbReference type="ChEBI" id="CHEBI:61977"/>
        <dbReference type="ChEBI" id="CHEBI:456216"/>
        <dbReference type="EC" id="2.7.11.1"/>
    </reaction>
</comment>
<comment type="subunit">
    <text evidence="8 9">Interacts with PUB9, PUB13 and PUB14. Binds to calmodulin (CaM) in a Ca(2+)-dependent manner.</text>
</comment>
<comment type="interaction">
    <interactant intactId="EBI-8523200">
        <id>Q9LPZ9</id>
    </interactant>
    <interactant intactId="EBI-1397259">
        <id>P25069</id>
        <label>CAM5</label>
    </interactant>
    <organismsDiffer>false</organismsDiffer>
    <experiments>4</experiments>
</comment>
<comment type="subcellular location">
    <subcellularLocation>
        <location evidence="9">Cell membrane</location>
        <topology evidence="9">Single-pass type I membrane protein</topology>
    </subcellularLocation>
</comment>
<comment type="tissue specificity">
    <text evidence="10">Mostly expressed in rosette leaves, and, to a lower extent, in cauline leaves and stems.</text>
</comment>
<comment type="induction">
    <text evidence="10">By P.syringae and salicylic acid (SA).</text>
</comment>
<comment type="PTM">
    <text evidence="9">Autophosphorylated.</text>
</comment>
<comment type="disruption phenotype">
    <text evidence="10">Enhanced resistances to the virulent bacterial pathogen P.syringae pv. tomato accompanied by an increase in PR1 expression.</text>
</comment>
<comment type="similarity">
    <text evidence="4">Belongs to the protein kinase superfamily. Ser/Thr protein kinase family.</text>
</comment>
<comment type="sequence caution" evidence="11">
    <conflict type="erroneous gene model prediction">
        <sequence resource="EMBL-CDS" id="AAF16650"/>
    </conflict>
</comment>
<comment type="sequence caution" evidence="11">
    <conflict type="frameshift">
        <sequence resource="EMBL" id="BX815523"/>
    </conflict>
</comment>
<name>SD113_ARATH</name>
<keyword id="KW-0067">ATP-binding</keyword>
<keyword id="KW-0112">Calmodulin-binding</keyword>
<keyword id="KW-1003">Cell membrane</keyword>
<keyword id="KW-1015">Disulfide bond</keyword>
<keyword id="KW-0245">EGF-like domain</keyword>
<keyword id="KW-0325">Glycoprotein</keyword>
<keyword id="KW-0418">Kinase</keyword>
<keyword id="KW-0430">Lectin</keyword>
<keyword id="KW-0472">Membrane</keyword>
<keyword id="KW-0547">Nucleotide-binding</keyword>
<keyword id="KW-0597">Phosphoprotein</keyword>
<keyword id="KW-0611">Plant defense</keyword>
<keyword id="KW-0675">Receptor</keyword>
<keyword id="KW-1185">Reference proteome</keyword>
<keyword id="KW-0723">Serine/threonine-protein kinase</keyword>
<keyword id="KW-0732">Signal</keyword>
<keyword id="KW-0808">Transferase</keyword>
<keyword id="KW-0812">Transmembrane</keyword>
<keyword id="KW-1133">Transmembrane helix</keyword>
<protein>
    <recommendedName>
        <fullName>G-type lectin S-receptor-like serine/threonine-protein kinase SD1-13</fullName>
        <ecNumber>2.7.11.1</ecNumber>
    </recommendedName>
    <alternativeName>
        <fullName>Calmodulin-binding receptor-like protein kinase 1</fullName>
    </alternativeName>
    <alternativeName>
        <fullName>Receptor-like protein kinase 2</fullName>
    </alternativeName>
    <alternativeName>
        <fullName>S-domain-1 (SD1) receptor kinase 13</fullName>
        <shortName>SD1-13</shortName>
    </alternativeName>
</protein>
<proteinExistence type="evidence at protein level"/>
<dbReference type="EC" id="2.7.11.1"/>
<dbReference type="EMBL" id="AF084036">
    <property type="protein sequence ID" value="AAC95353.1"/>
    <property type="molecule type" value="Genomic_DNA"/>
</dbReference>
<dbReference type="EMBL" id="AC011661">
    <property type="protein sequence ID" value="AAF16650.1"/>
    <property type="status" value="ALT_SEQ"/>
    <property type="molecule type" value="Genomic_DNA"/>
</dbReference>
<dbReference type="EMBL" id="CP002684">
    <property type="protein sequence ID" value="AEE28721.1"/>
    <property type="molecule type" value="Genomic_DNA"/>
</dbReference>
<dbReference type="EMBL" id="BX815523">
    <property type="status" value="NOT_ANNOTATED_CDS"/>
    <property type="molecule type" value="mRNA"/>
</dbReference>
<dbReference type="SMR" id="Q9LPZ9"/>
<dbReference type="BioGRID" id="22917">
    <property type="interactions" value="3"/>
</dbReference>
<dbReference type="FunCoup" id="Q9LPZ9">
    <property type="interactions" value="605"/>
</dbReference>
<dbReference type="IntAct" id="Q9LPZ9">
    <property type="interactions" value="4"/>
</dbReference>
<dbReference type="MINT" id="Q9LPZ9"/>
<dbReference type="STRING" id="3702.Q9LPZ9"/>
<dbReference type="GlyCosmos" id="Q9LPZ9">
    <property type="glycosylation" value="6 sites, No reported glycans"/>
</dbReference>
<dbReference type="GlyGen" id="Q9LPZ9">
    <property type="glycosylation" value="7 sites"/>
</dbReference>
<dbReference type="iPTMnet" id="Q9LPZ9"/>
<dbReference type="PaxDb" id="3702-AT1G11350.1"/>
<dbReference type="ProteomicsDB" id="232946"/>
<dbReference type="EnsemblPlants" id="AT1G11350.1">
    <property type="protein sequence ID" value="AT1G11350.1"/>
    <property type="gene ID" value="AT1G11350"/>
</dbReference>
<dbReference type="GeneID" id="837677"/>
<dbReference type="Gramene" id="AT1G11350.1">
    <property type="protein sequence ID" value="AT1G11350.1"/>
    <property type="gene ID" value="AT1G11350"/>
</dbReference>
<dbReference type="KEGG" id="ath:AT1G11350"/>
<dbReference type="Araport" id="AT1G11350"/>
<dbReference type="TAIR" id="AT1G11350">
    <property type="gene designation" value="SD1-13"/>
</dbReference>
<dbReference type="eggNOG" id="ENOG502QSUU">
    <property type="taxonomic scope" value="Eukaryota"/>
</dbReference>
<dbReference type="HOGENOM" id="CLU_000288_116_1_1"/>
<dbReference type="InParanoid" id="Q9LPZ9"/>
<dbReference type="OMA" id="GANEQDC"/>
<dbReference type="PhylomeDB" id="Q9LPZ9"/>
<dbReference type="PRO" id="PR:Q9LPZ9"/>
<dbReference type="Proteomes" id="UP000006548">
    <property type="component" value="Chromosome 1"/>
</dbReference>
<dbReference type="ExpressionAtlas" id="Q9LPZ9">
    <property type="expression patterns" value="baseline and differential"/>
</dbReference>
<dbReference type="GO" id="GO:0005576">
    <property type="term" value="C:extracellular region"/>
    <property type="evidence" value="ECO:0007005"/>
    <property type="project" value="TAIR"/>
</dbReference>
<dbReference type="GO" id="GO:0005886">
    <property type="term" value="C:plasma membrane"/>
    <property type="evidence" value="ECO:0000314"/>
    <property type="project" value="TAIR"/>
</dbReference>
<dbReference type="GO" id="GO:0005524">
    <property type="term" value="F:ATP binding"/>
    <property type="evidence" value="ECO:0007669"/>
    <property type="project" value="UniProtKB-KW"/>
</dbReference>
<dbReference type="GO" id="GO:0005516">
    <property type="term" value="F:calmodulin binding"/>
    <property type="evidence" value="ECO:0000314"/>
    <property type="project" value="UniProtKB"/>
</dbReference>
<dbReference type="GO" id="GO:0030246">
    <property type="term" value="F:carbohydrate binding"/>
    <property type="evidence" value="ECO:0007669"/>
    <property type="project" value="UniProtKB-KW"/>
</dbReference>
<dbReference type="GO" id="GO:0004672">
    <property type="term" value="F:protein kinase activity"/>
    <property type="evidence" value="ECO:0000314"/>
    <property type="project" value="TAIR"/>
</dbReference>
<dbReference type="GO" id="GO:0106310">
    <property type="term" value="F:protein serine kinase activity"/>
    <property type="evidence" value="ECO:0007669"/>
    <property type="project" value="RHEA"/>
</dbReference>
<dbReference type="GO" id="GO:0004674">
    <property type="term" value="F:protein serine/threonine kinase activity"/>
    <property type="evidence" value="ECO:0000314"/>
    <property type="project" value="UniProtKB"/>
</dbReference>
<dbReference type="GO" id="GO:0031625">
    <property type="term" value="F:ubiquitin protein ligase binding"/>
    <property type="evidence" value="ECO:0000353"/>
    <property type="project" value="UniProtKB"/>
</dbReference>
<dbReference type="GO" id="GO:0071446">
    <property type="term" value="P:cellular response to salicylic acid stimulus"/>
    <property type="evidence" value="ECO:0000270"/>
    <property type="project" value="UniProtKB"/>
</dbReference>
<dbReference type="GO" id="GO:0042742">
    <property type="term" value="P:defense response to bacterium"/>
    <property type="evidence" value="ECO:0000315"/>
    <property type="project" value="UniProtKB"/>
</dbReference>
<dbReference type="GO" id="GO:0046777">
    <property type="term" value="P:protein autophosphorylation"/>
    <property type="evidence" value="ECO:0000314"/>
    <property type="project" value="UniProtKB"/>
</dbReference>
<dbReference type="GO" id="GO:0048544">
    <property type="term" value="P:recognition of pollen"/>
    <property type="evidence" value="ECO:0007669"/>
    <property type="project" value="InterPro"/>
</dbReference>
<dbReference type="CDD" id="cd00028">
    <property type="entry name" value="B_lectin"/>
    <property type="match status" value="1"/>
</dbReference>
<dbReference type="CDD" id="cd01098">
    <property type="entry name" value="PAN_AP_plant"/>
    <property type="match status" value="1"/>
</dbReference>
<dbReference type="CDD" id="cd14066">
    <property type="entry name" value="STKc_IRAK"/>
    <property type="match status" value="1"/>
</dbReference>
<dbReference type="FunFam" id="1.10.510.10:FF:000060">
    <property type="entry name" value="G-type lectin S-receptor-like serine/threonine-protein kinase"/>
    <property type="match status" value="1"/>
</dbReference>
<dbReference type="FunFam" id="2.90.10.10:FF:000001">
    <property type="entry name" value="G-type lectin S-receptor-like serine/threonine-protein kinase"/>
    <property type="match status" value="1"/>
</dbReference>
<dbReference type="FunFam" id="3.30.200.20:FF:000145">
    <property type="entry name" value="receptor-like serine/threonine-protein kinase SD1-8"/>
    <property type="match status" value="1"/>
</dbReference>
<dbReference type="Gene3D" id="2.90.10.10">
    <property type="entry name" value="Bulb-type lectin domain"/>
    <property type="match status" value="1"/>
</dbReference>
<dbReference type="Gene3D" id="3.30.200.20">
    <property type="entry name" value="Phosphorylase Kinase, domain 1"/>
    <property type="match status" value="1"/>
</dbReference>
<dbReference type="Gene3D" id="1.10.510.10">
    <property type="entry name" value="Transferase(Phosphotransferase) domain 1"/>
    <property type="match status" value="1"/>
</dbReference>
<dbReference type="InterPro" id="IPR001480">
    <property type="entry name" value="Bulb-type_lectin_dom"/>
</dbReference>
<dbReference type="InterPro" id="IPR036426">
    <property type="entry name" value="Bulb-type_lectin_dom_sf"/>
</dbReference>
<dbReference type="InterPro" id="IPR011009">
    <property type="entry name" value="Kinase-like_dom_sf"/>
</dbReference>
<dbReference type="InterPro" id="IPR003609">
    <property type="entry name" value="Pan_app"/>
</dbReference>
<dbReference type="InterPro" id="IPR000719">
    <property type="entry name" value="Prot_kinase_dom"/>
</dbReference>
<dbReference type="InterPro" id="IPR017441">
    <property type="entry name" value="Protein_kinase_ATP_BS"/>
</dbReference>
<dbReference type="InterPro" id="IPR021820">
    <property type="entry name" value="S-locus_recpt_kinase_C"/>
</dbReference>
<dbReference type="InterPro" id="IPR000858">
    <property type="entry name" value="S_locus_glycoprot_dom"/>
</dbReference>
<dbReference type="InterPro" id="IPR001245">
    <property type="entry name" value="Ser-Thr/Tyr_kinase_cat_dom"/>
</dbReference>
<dbReference type="InterPro" id="IPR008271">
    <property type="entry name" value="Ser/Thr_kinase_AS"/>
</dbReference>
<dbReference type="InterPro" id="IPR024171">
    <property type="entry name" value="SRK-like_kinase"/>
</dbReference>
<dbReference type="PANTHER" id="PTHR27002:SF1100">
    <property type="entry name" value="G-TYPE LECTIN S-RECEPTOR-LIKE SERINE_THREONINE-PROTEIN KINASE SD1-13"/>
    <property type="match status" value="1"/>
</dbReference>
<dbReference type="PANTHER" id="PTHR27002">
    <property type="entry name" value="RECEPTOR-LIKE SERINE/THREONINE-PROTEIN KINASE SD1-8"/>
    <property type="match status" value="1"/>
</dbReference>
<dbReference type="Pfam" id="PF01453">
    <property type="entry name" value="B_lectin"/>
    <property type="match status" value="1"/>
</dbReference>
<dbReference type="Pfam" id="PF11883">
    <property type="entry name" value="DUF3403"/>
    <property type="match status" value="1"/>
</dbReference>
<dbReference type="Pfam" id="PF08276">
    <property type="entry name" value="PAN_2"/>
    <property type="match status" value="1"/>
</dbReference>
<dbReference type="Pfam" id="PF07714">
    <property type="entry name" value="PK_Tyr_Ser-Thr"/>
    <property type="match status" value="1"/>
</dbReference>
<dbReference type="Pfam" id="PF00954">
    <property type="entry name" value="S_locus_glycop"/>
    <property type="match status" value="1"/>
</dbReference>
<dbReference type="PIRSF" id="PIRSF000641">
    <property type="entry name" value="SRK"/>
    <property type="match status" value="1"/>
</dbReference>
<dbReference type="SMART" id="SM00108">
    <property type="entry name" value="B_lectin"/>
    <property type="match status" value="1"/>
</dbReference>
<dbReference type="SMART" id="SM00473">
    <property type="entry name" value="PAN_AP"/>
    <property type="match status" value="1"/>
</dbReference>
<dbReference type="SMART" id="SM00220">
    <property type="entry name" value="S_TKc"/>
    <property type="match status" value="1"/>
</dbReference>
<dbReference type="SUPFAM" id="SSF51110">
    <property type="entry name" value="alpha-D-mannose-specific plant lectins"/>
    <property type="match status" value="1"/>
</dbReference>
<dbReference type="SUPFAM" id="SSF56112">
    <property type="entry name" value="Protein kinase-like (PK-like)"/>
    <property type="match status" value="1"/>
</dbReference>
<dbReference type="PROSITE" id="PS50927">
    <property type="entry name" value="BULB_LECTIN"/>
    <property type="match status" value="1"/>
</dbReference>
<dbReference type="PROSITE" id="PS50948">
    <property type="entry name" value="PAN"/>
    <property type="match status" value="1"/>
</dbReference>
<dbReference type="PROSITE" id="PS00107">
    <property type="entry name" value="PROTEIN_KINASE_ATP"/>
    <property type="match status" value="1"/>
</dbReference>
<dbReference type="PROSITE" id="PS50011">
    <property type="entry name" value="PROTEIN_KINASE_DOM"/>
    <property type="match status" value="1"/>
</dbReference>
<dbReference type="PROSITE" id="PS00108">
    <property type="entry name" value="PROTEIN_KINASE_ST"/>
    <property type="match status" value="1"/>
</dbReference>